<feature type="chain" id="PRO_1000116408" description="SsrA-binding protein">
    <location>
        <begin position="1"/>
        <end position="158"/>
    </location>
</feature>
<reference key="1">
    <citation type="journal article" date="2008" name="J. Bacteriol.">
        <title>Comparative genome sequence analysis of multidrug-resistant Acinetobacter baumannii.</title>
        <authorList>
            <person name="Adams M.D."/>
            <person name="Goglin K."/>
            <person name="Molyneaux N."/>
            <person name="Hujer K.M."/>
            <person name="Lavender H."/>
            <person name="Jamison J.J."/>
            <person name="MacDonald I.J."/>
            <person name="Martin K.M."/>
            <person name="Russo T."/>
            <person name="Campagnari A.A."/>
            <person name="Hujer A.M."/>
            <person name="Bonomo R.A."/>
            <person name="Gill S.R."/>
        </authorList>
    </citation>
    <scope>NUCLEOTIDE SEQUENCE [LARGE SCALE GENOMIC DNA]</scope>
    <source>
        <strain>AB307-0294</strain>
    </source>
</reference>
<proteinExistence type="inferred from homology"/>
<name>SSRP_ACIB3</name>
<keyword id="KW-0963">Cytoplasm</keyword>
<keyword id="KW-0694">RNA-binding</keyword>
<gene>
    <name evidence="1" type="primary">smpB</name>
    <name type="ordered locus">ABBFA_002769</name>
</gene>
<sequence length="158" mass="18080">MAKATVVKKHNGGTIAQNKRARHDYFIEEKFEAGMSLLGWEVKSLRAGRMSLTESYVIFKNGEAFLFGAQIQPLLSASTHIVPEATRTRKLLLSRRELEKLMGAVNQKGYSCVPLACYWKGHLVKLEIALVKGKQLHDKRATEKERDWQRDKARIFHK</sequence>
<accession>B7GYP8</accession>
<comment type="function">
    <text evidence="1">Required for rescue of stalled ribosomes mediated by trans-translation. Binds to transfer-messenger RNA (tmRNA), required for stable association of tmRNA with ribosomes. tmRNA and SmpB together mimic tRNA shape, replacing the anticodon stem-loop with SmpB. tmRNA is encoded by the ssrA gene; the 2 termini fold to resemble tRNA(Ala) and it encodes a 'tag peptide', a short internal open reading frame. During trans-translation Ala-aminoacylated tmRNA acts like a tRNA, entering the A-site of stalled ribosomes, displacing the stalled mRNA. The ribosome then switches to translate the ORF on the tmRNA; the nascent peptide is terminated with the 'tag peptide' encoded by the tmRNA and targeted for degradation. The ribosome is freed to recommence translation, which seems to be the essential function of trans-translation.</text>
</comment>
<comment type="subcellular location">
    <subcellularLocation>
        <location evidence="1">Cytoplasm</location>
    </subcellularLocation>
    <text evidence="1">The tmRNA-SmpB complex associates with stalled 70S ribosomes.</text>
</comment>
<comment type="similarity">
    <text evidence="1">Belongs to the SmpB family.</text>
</comment>
<organism>
    <name type="scientific">Acinetobacter baumannii (strain AB307-0294)</name>
    <dbReference type="NCBI Taxonomy" id="557600"/>
    <lineage>
        <taxon>Bacteria</taxon>
        <taxon>Pseudomonadati</taxon>
        <taxon>Pseudomonadota</taxon>
        <taxon>Gammaproteobacteria</taxon>
        <taxon>Moraxellales</taxon>
        <taxon>Moraxellaceae</taxon>
        <taxon>Acinetobacter</taxon>
        <taxon>Acinetobacter calcoaceticus/baumannii complex</taxon>
    </lineage>
</organism>
<dbReference type="EMBL" id="CP001172">
    <property type="protein sequence ID" value="ACJ58307.1"/>
    <property type="molecule type" value="Genomic_DNA"/>
</dbReference>
<dbReference type="RefSeq" id="WP_001029798.1">
    <property type="nucleotide sequence ID" value="NZ_CP001172.1"/>
</dbReference>
<dbReference type="SMR" id="B7GYP8"/>
<dbReference type="GeneID" id="92892774"/>
<dbReference type="HOGENOM" id="CLU_108953_3_0_6"/>
<dbReference type="Proteomes" id="UP000006924">
    <property type="component" value="Chromosome"/>
</dbReference>
<dbReference type="GO" id="GO:0005829">
    <property type="term" value="C:cytosol"/>
    <property type="evidence" value="ECO:0007669"/>
    <property type="project" value="TreeGrafter"/>
</dbReference>
<dbReference type="GO" id="GO:0003723">
    <property type="term" value="F:RNA binding"/>
    <property type="evidence" value="ECO:0007669"/>
    <property type="project" value="UniProtKB-UniRule"/>
</dbReference>
<dbReference type="GO" id="GO:0070929">
    <property type="term" value="P:trans-translation"/>
    <property type="evidence" value="ECO:0007669"/>
    <property type="project" value="UniProtKB-UniRule"/>
</dbReference>
<dbReference type="CDD" id="cd09294">
    <property type="entry name" value="SmpB"/>
    <property type="match status" value="1"/>
</dbReference>
<dbReference type="Gene3D" id="2.40.280.10">
    <property type="match status" value="1"/>
</dbReference>
<dbReference type="HAMAP" id="MF_00023">
    <property type="entry name" value="SmpB"/>
    <property type="match status" value="1"/>
</dbReference>
<dbReference type="InterPro" id="IPR023620">
    <property type="entry name" value="SmpB"/>
</dbReference>
<dbReference type="InterPro" id="IPR000037">
    <property type="entry name" value="SsrA-bd_prot"/>
</dbReference>
<dbReference type="InterPro" id="IPR020081">
    <property type="entry name" value="SsrA-bd_prot_CS"/>
</dbReference>
<dbReference type="NCBIfam" id="NF003843">
    <property type="entry name" value="PRK05422.1"/>
    <property type="match status" value="1"/>
</dbReference>
<dbReference type="NCBIfam" id="TIGR00086">
    <property type="entry name" value="smpB"/>
    <property type="match status" value="1"/>
</dbReference>
<dbReference type="PANTHER" id="PTHR30308:SF2">
    <property type="entry name" value="SSRA-BINDING PROTEIN"/>
    <property type="match status" value="1"/>
</dbReference>
<dbReference type="PANTHER" id="PTHR30308">
    <property type="entry name" value="TMRNA-BINDING COMPONENT OF TRANS-TRANSLATION TAGGING COMPLEX"/>
    <property type="match status" value="1"/>
</dbReference>
<dbReference type="Pfam" id="PF01668">
    <property type="entry name" value="SmpB"/>
    <property type="match status" value="1"/>
</dbReference>
<dbReference type="SUPFAM" id="SSF74982">
    <property type="entry name" value="Small protein B (SmpB)"/>
    <property type="match status" value="1"/>
</dbReference>
<dbReference type="PROSITE" id="PS01317">
    <property type="entry name" value="SSRP"/>
    <property type="match status" value="1"/>
</dbReference>
<protein>
    <recommendedName>
        <fullName evidence="1">SsrA-binding protein</fullName>
    </recommendedName>
    <alternativeName>
        <fullName evidence="1">Small protein B</fullName>
    </alternativeName>
</protein>
<evidence type="ECO:0000255" key="1">
    <source>
        <dbReference type="HAMAP-Rule" id="MF_00023"/>
    </source>
</evidence>